<name>V243_FOWPN</name>
<feature type="chain" id="PRO_0000067129" description="Putative ankyrin repeat protein FPV243">
    <location>
        <begin position="1"/>
        <end position="262"/>
    </location>
</feature>
<feature type="repeat" description="ANK">
    <location>
        <begin position="25"/>
        <end position="54"/>
    </location>
</feature>
<accession>Q9J4Z7</accession>
<reference key="1">
    <citation type="journal article" date="2000" name="J. Virol.">
        <title>The genome of fowlpox virus.</title>
        <authorList>
            <person name="Afonso C.L."/>
            <person name="Tulman E.R."/>
            <person name="Lu Z."/>
            <person name="Zsak L."/>
            <person name="Kutish G.F."/>
            <person name="Rock D.L."/>
        </authorList>
    </citation>
    <scope>NUCLEOTIDE SEQUENCE [LARGE SCALE GENOMIC DNA]</scope>
</reference>
<organismHost>
    <name type="scientific">Vertebrata</name>
    <dbReference type="NCBI Taxonomy" id="7742"/>
</organismHost>
<keyword id="KW-0040">ANK repeat</keyword>
<keyword id="KW-1185">Reference proteome</keyword>
<sequence>MFDRTWHISRFLLEYGADVNIKNRYGSTPLFEAICNCSCKNVKLFLENNADINEVDLDGDATLMKIFNYNCRIHSGLNSVHLRIARIVIPYLKVIGLKNKHVKNVHAYKQNINFFNSVKQLRLISDESDREINRMKNTILRKNKFGNDITMYDILLEKNMNQLVQIIKNPLIKKRCSELILFKRIVKNNIIYIENRYQKIHGANTVIEFYQYEYTDKWMILPQEIKINILCYLDNKELDYIYESSLENNKNNTSDKKYDVCC</sequence>
<protein>
    <recommendedName>
        <fullName>Putative ankyrin repeat protein FPV243</fullName>
    </recommendedName>
</protein>
<organism>
    <name type="scientific">Fowlpox virus (strain NVSL)</name>
    <name type="common">FPV</name>
    <dbReference type="NCBI Taxonomy" id="928301"/>
    <lineage>
        <taxon>Viruses</taxon>
        <taxon>Varidnaviria</taxon>
        <taxon>Bamfordvirae</taxon>
        <taxon>Nucleocytoviricota</taxon>
        <taxon>Pokkesviricetes</taxon>
        <taxon>Chitovirales</taxon>
        <taxon>Poxviridae</taxon>
        <taxon>Chordopoxvirinae</taxon>
        <taxon>Avipoxvirus</taxon>
        <taxon>Fowlpox virus</taxon>
    </lineage>
</organism>
<gene>
    <name type="ordered locus">FPV243</name>
</gene>
<proteinExistence type="predicted"/>
<dbReference type="EMBL" id="AF198100">
    <property type="protein sequence ID" value="AAF44587.1"/>
    <property type="molecule type" value="Genomic_DNA"/>
</dbReference>
<dbReference type="RefSeq" id="NP_039206.1">
    <property type="nucleotide sequence ID" value="NC_002188.1"/>
</dbReference>
<dbReference type="SMR" id="Q9J4Z7"/>
<dbReference type="GeneID" id="1486815"/>
<dbReference type="KEGG" id="vg:1486815"/>
<dbReference type="Proteomes" id="UP000008597">
    <property type="component" value="Segment"/>
</dbReference>
<dbReference type="Gene3D" id="1.25.40.20">
    <property type="entry name" value="Ankyrin repeat-containing domain"/>
    <property type="match status" value="1"/>
</dbReference>
<dbReference type="InterPro" id="IPR002110">
    <property type="entry name" value="Ankyrin_rpt"/>
</dbReference>
<dbReference type="InterPro" id="IPR036770">
    <property type="entry name" value="Ankyrin_rpt-contain_sf"/>
</dbReference>
<dbReference type="InterPro" id="IPR018272">
    <property type="entry name" value="PRANC_domain"/>
</dbReference>
<dbReference type="Pfam" id="PF12796">
    <property type="entry name" value="Ank_2"/>
    <property type="match status" value="1"/>
</dbReference>
<dbReference type="Pfam" id="PF09372">
    <property type="entry name" value="PRANC"/>
    <property type="match status" value="1"/>
</dbReference>
<dbReference type="SUPFAM" id="SSF48403">
    <property type="entry name" value="Ankyrin repeat"/>
    <property type="match status" value="1"/>
</dbReference>
<dbReference type="PROSITE" id="PS50297">
    <property type="entry name" value="ANK_REP_REGION"/>
    <property type="match status" value="1"/>
</dbReference>
<dbReference type="PROSITE" id="PS50088">
    <property type="entry name" value="ANK_REPEAT"/>
    <property type="match status" value="1"/>
</dbReference>